<accession>B2K130</accession>
<evidence type="ECO:0000255" key="1">
    <source>
        <dbReference type="HAMAP-Rule" id="MF_00139"/>
    </source>
</evidence>
<evidence type="ECO:0000255" key="2">
    <source>
        <dbReference type="PROSITE-ProRule" id="PRU01202"/>
    </source>
</evidence>
<gene>
    <name evidence="1" type="primary">purH</name>
    <name type="ordered locus">YPTS_0321</name>
</gene>
<dbReference type="EC" id="2.1.2.3" evidence="1"/>
<dbReference type="EC" id="3.5.4.10" evidence="1"/>
<dbReference type="EMBL" id="CP001048">
    <property type="protein sequence ID" value="ACC87312.1"/>
    <property type="molecule type" value="Genomic_DNA"/>
</dbReference>
<dbReference type="RefSeq" id="WP_011191559.1">
    <property type="nucleotide sequence ID" value="NZ_CP009780.1"/>
</dbReference>
<dbReference type="SMR" id="B2K130"/>
<dbReference type="GeneID" id="49787708"/>
<dbReference type="KEGG" id="ypb:YPTS_0321"/>
<dbReference type="PATRIC" id="fig|502801.10.peg.3997"/>
<dbReference type="UniPathway" id="UPA00074">
    <property type="reaction ID" value="UER00133"/>
</dbReference>
<dbReference type="UniPathway" id="UPA00074">
    <property type="reaction ID" value="UER00135"/>
</dbReference>
<dbReference type="GO" id="GO:0005829">
    <property type="term" value="C:cytosol"/>
    <property type="evidence" value="ECO:0007669"/>
    <property type="project" value="TreeGrafter"/>
</dbReference>
<dbReference type="GO" id="GO:0003937">
    <property type="term" value="F:IMP cyclohydrolase activity"/>
    <property type="evidence" value="ECO:0007669"/>
    <property type="project" value="UniProtKB-UniRule"/>
</dbReference>
<dbReference type="GO" id="GO:0004643">
    <property type="term" value="F:phosphoribosylaminoimidazolecarboxamide formyltransferase activity"/>
    <property type="evidence" value="ECO:0007669"/>
    <property type="project" value="UniProtKB-UniRule"/>
</dbReference>
<dbReference type="GO" id="GO:0006189">
    <property type="term" value="P:'de novo' IMP biosynthetic process"/>
    <property type="evidence" value="ECO:0007669"/>
    <property type="project" value="UniProtKB-UniRule"/>
</dbReference>
<dbReference type="CDD" id="cd01421">
    <property type="entry name" value="IMPCH"/>
    <property type="match status" value="1"/>
</dbReference>
<dbReference type="FunFam" id="3.40.140.20:FF:000001">
    <property type="entry name" value="Bifunctional purine biosynthesis protein PurH"/>
    <property type="match status" value="1"/>
</dbReference>
<dbReference type="FunFam" id="3.40.140.20:FF:000002">
    <property type="entry name" value="Bifunctional purine biosynthesis protein PurH"/>
    <property type="match status" value="1"/>
</dbReference>
<dbReference type="FunFam" id="3.40.50.1380:FF:000001">
    <property type="entry name" value="Bifunctional purine biosynthesis protein PurH"/>
    <property type="match status" value="1"/>
</dbReference>
<dbReference type="Gene3D" id="3.40.140.20">
    <property type="match status" value="2"/>
</dbReference>
<dbReference type="Gene3D" id="3.40.50.1380">
    <property type="entry name" value="Methylglyoxal synthase-like domain"/>
    <property type="match status" value="1"/>
</dbReference>
<dbReference type="HAMAP" id="MF_00139">
    <property type="entry name" value="PurH"/>
    <property type="match status" value="1"/>
</dbReference>
<dbReference type="InterPro" id="IPR024051">
    <property type="entry name" value="AICAR_Tfase_dup_dom_sf"/>
</dbReference>
<dbReference type="InterPro" id="IPR016193">
    <property type="entry name" value="Cytidine_deaminase-like"/>
</dbReference>
<dbReference type="InterPro" id="IPR011607">
    <property type="entry name" value="MGS-like_dom"/>
</dbReference>
<dbReference type="InterPro" id="IPR036914">
    <property type="entry name" value="MGS-like_dom_sf"/>
</dbReference>
<dbReference type="InterPro" id="IPR002695">
    <property type="entry name" value="PurH-like"/>
</dbReference>
<dbReference type="NCBIfam" id="NF002049">
    <property type="entry name" value="PRK00881.1"/>
    <property type="match status" value="1"/>
</dbReference>
<dbReference type="NCBIfam" id="TIGR00355">
    <property type="entry name" value="purH"/>
    <property type="match status" value="1"/>
</dbReference>
<dbReference type="PANTHER" id="PTHR11692:SF0">
    <property type="entry name" value="BIFUNCTIONAL PURINE BIOSYNTHESIS PROTEIN ATIC"/>
    <property type="match status" value="1"/>
</dbReference>
<dbReference type="PANTHER" id="PTHR11692">
    <property type="entry name" value="BIFUNCTIONAL PURINE BIOSYNTHESIS PROTEIN PURH"/>
    <property type="match status" value="1"/>
</dbReference>
<dbReference type="Pfam" id="PF01808">
    <property type="entry name" value="AICARFT_IMPCHas"/>
    <property type="match status" value="1"/>
</dbReference>
<dbReference type="Pfam" id="PF02142">
    <property type="entry name" value="MGS"/>
    <property type="match status" value="1"/>
</dbReference>
<dbReference type="PIRSF" id="PIRSF000414">
    <property type="entry name" value="AICARFT_IMPCHas"/>
    <property type="match status" value="1"/>
</dbReference>
<dbReference type="SMART" id="SM00798">
    <property type="entry name" value="AICARFT_IMPCHas"/>
    <property type="match status" value="1"/>
</dbReference>
<dbReference type="SMART" id="SM00851">
    <property type="entry name" value="MGS"/>
    <property type="match status" value="1"/>
</dbReference>
<dbReference type="SUPFAM" id="SSF53927">
    <property type="entry name" value="Cytidine deaminase-like"/>
    <property type="match status" value="1"/>
</dbReference>
<dbReference type="SUPFAM" id="SSF52335">
    <property type="entry name" value="Methylglyoxal synthase-like"/>
    <property type="match status" value="1"/>
</dbReference>
<dbReference type="PROSITE" id="PS51855">
    <property type="entry name" value="MGS"/>
    <property type="match status" value="1"/>
</dbReference>
<name>PUR9_YERPB</name>
<sequence>MQQRRPIRRALLSVSDKAGIIEFAQALSQRGIELLSTGGTARLLADAGLPVTEVSDYTGFPEMMDGRVKTLHPKVHGGILGRRGQDDGIMAQHGIQPIDIVVVNLYPFAQTVARPDCSLEDAVENIDIGGPTMVRSAAKNHKDVAIVVKSSDYPAIITELDNNDGSLTYPTRFNLAIKAFEHTAAYDSMIANYFGTLVPPYHGDTEQPSGHFPRTLNLNYIKKQDMRYGENSHQQAAFYIEEDVKEASVATAQQLQGKALSYNNIADTDAALECVKEFSEPACVIVKHANPCGVAIGDSILAAYERAYQTDPTSAFGGIIAFNRELDAATANAIISRQFVEVIIAPTVSSDALALLAAKQNVRVLTCGQWQARSAGLDFKRVNGGLLVQERDLGMVTAADLRVVSKRQPTEQELRDALFCWKVAKFVKSNAIVYARDNMTIGIGAGQMSRVYSAKIAGIKAADEGLEVAGSAMASDAFFPFRDGIDAAAAVGITCVIQPGGSIRDDEVIAAADEHGIAMIFTDMRHFRH</sequence>
<comment type="catalytic activity">
    <reaction evidence="1">
        <text>(6R)-10-formyltetrahydrofolate + 5-amino-1-(5-phospho-beta-D-ribosyl)imidazole-4-carboxamide = 5-formamido-1-(5-phospho-D-ribosyl)imidazole-4-carboxamide + (6S)-5,6,7,8-tetrahydrofolate</text>
        <dbReference type="Rhea" id="RHEA:22192"/>
        <dbReference type="ChEBI" id="CHEBI:57453"/>
        <dbReference type="ChEBI" id="CHEBI:58467"/>
        <dbReference type="ChEBI" id="CHEBI:58475"/>
        <dbReference type="ChEBI" id="CHEBI:195366"/>
        <dbReference type="EC" id="2.1.2.3"/>
    </reaction>
</comment>
<comment type="catalytic activity">
    <reaction evidence="1">
        <text>IMP + H2O = 5-formamido-1-(5-phospho-D-ribosyl)imidazole-4-carboxamide</text>
        <dbReference type="Rhea" id="RHEA:18445"/>
        <dbReference type="ChEBI" id="CHEBI:15377"/>
        <dbReference type="ChEBI" id="CHEBI:58053"/>
        <dbReference type="ChEBI" id="CHEBI:58467"/>
        <dbReference type="EC" id="3.5.4.10"/>
    </reaction>
</comment>
<comment type="pathway">
    <text evidence="1">Purine metabolism; IMP biosynthesis via de novo pathway; 5-formamido-1-(5-phospho-D-ribosyl)imidazole-4-carboxamide from 5-amino-1-(5-phospho-D-ribosyl)imidazole-4-carboxamide (10-formyl THF route): step 1/1.</text>
</comment>
<comment type="pathway">
    <text evidence="1">Purine metabolism; IMP biosynthesis via de novo pathway; IMP from 5-formamido-1-(5-phospho-D-ribosyl)imidazole-4-carboxamide: step 1/1.</text>
</comment>
<comment type="domain">
    <text evidence="1">The IMP cyclohydrolase activity resides in the N-terminal region.</text>
</comment>
<comment type="similarity">
    <text evidence="1">Belongs to the PurH family.</text>
</comment>
<organism>
    <name type="scientific">Yersinia pseudotuberculosis serotype IB (strain PB1/+)</name>
    <dbReference type="NCBI Taxonomy" id="502801"/>
    <lineage>
        <taxon>Bacteria</taxon>
        <taxon>Pseudomonadati</taxon>
        <taxon>Pseudomonadota</taxon>
        <taxon>Gammaproteobacteria</taxon>
        <taxon>Enterobacterales</taxon>
        <taxon>Yersiniaceae</taxon>
        <taxon>Yersinia</taxon>
    </lineage>
</organism>
<protein>
    <recommendedName>
        <fullName evidence="1">Bifunctional purine biosynthesis protein PurH</fullName>
    </recommendedName>
    <domain>
        <recommendedName>
            <fullName evidence="1">Phosphoribosylaminoimidazolecarboxamide formyltransferase</fullName>
            <ecNumber evidence="1">2.1.2.3</ecNumber>
        </recommendedName>
        <alternativeName>
            <fullName evidence="1">AICAR transformylase</fullName>
        </alternativeName>
    </domain>
    <domain>
        <recommendedName>
            <fullName evidence="1">IMP cyclohydrolase</fullName>
            <ecNumber evidence="1">3.5.4.10</ecNumber>
        </recommendedName>
        <alternativeName>
            <fullName evidence="1">ATIC</fullName>
        </alternativeName>
        <alternativeName>
            <fullName evidence="1">IMP synthase</fullName>
        </alternativeName>
        <alternativeName>
            <fullName evidence="1">Inosinicase</fullName>
        </alternativeName>
    </domain>
</protein>
<feature type="chain" id="PRO_1000096111" description="Bifunctional purine biosynthesis protein PurH">
    <location>
        <begin position="1"/>
        <end position="529"/>
    </location>
</feature>
<feature type="domain" description="MGS-like" evidence="2">
    <location>
        <begin position="1"/>
        <end position="148"/>
    </location>
</feature>
<keyword id="KW-0378">Hydrolase</keyword>
<keyword id="KW-0511">Multifunctional enzyme</keyword>
<keyword id="KW-0658">Purine biosynthesis</keyword>
<keyword id="KW-0808">Transferase</keyword>
<proteinExistence type="inferred from homology"/>
<reference key="1">
    <citation type="submission" date="2008-04" db="EMBL/GenBank/DDBJ databases">
        <title>Complete sequence of Yersinia pseudotuberculosis PB1/+.</title>
        <authorList>
            <person name="Copeland A."/>
            <person name="Lucas S."/>
            <person name="Lapidus A."/>
            <person name="Glavina del Rio T."/>
            <person name="Dalin E."/>
            <person name="Tice H."/>
            <person name="Bruce D."/>
            <person name="Goodwin L."/>
            <person name="Pitluck S."/>
            <person name="Munk A.C."/>
            <person name="Brettin T."/>
            <person name="Detter J.C."/>
            <person name="Han C."/>
            <person name="Tapia R."/>
            <person name="Schmutz J."/>
            <person name="Larimer F."/>
            <person name="Land M."/>
            <person name="Hauser L."/>
            <person name="Challacombe J.F."/>
            <person name="Green L."/>
            <person name="Lindler L.E."/>
            <person name="Nikolich M.P."/>
            <person name="Richardson P."/>
        </authorList>
    </citation>
    <scope>NUCLEOTIDE SEQUENCE [LARGE SCALE GENOMIC DNA]</scope>
    <source>
        <strain>PB1/+</strain>
    </source>
</reference>